<gene>
    <name evidence="1" type="primary">pyrF</name>
    <name type="ordered locus">Aave_4696</name>
</gene>
<feature type="chain" id="PRO_1000066453" description="Orotidine 5'-phosphate decarboxylase">
    <location>
        <begin position="1"/>
        <end position="274"/>
    </location>
</feature>
<feature type="active site" description="Proton donor" evidence="1">
    <location>
        <position position="95"/>
    </location>
</feature>
<name>PYRF_PARC0</name>
<organism>
    <name type="scientific">Paracidovorax citrulli (strain AAC00-1)</name>
    <name type="common">Acidovorax citrulli</name>
    <dbReference type="NCBI Taxonomy" id="397945"/>
    <lineage>
        <taxon>Bacteria</taxon>
        <taxon>Pseudomonadati</taxon>
        <taxon>Pseudomonadota</taxon>
        <taxon>Betaproteobacteria</taxon>
        <taxon>Burkholderiales</taxon>
        <taxon>Comamonadaceae</taxon>
        <taxon>Paracidovorax</taxon>
    </lineage>
</organism>
<protein>
    <recommendedName>
        <fullName evidence="1">Orotidine 5'-phosphate decarboxylase</fullName>
        <ecNumber evidence="1">4.1.1.23</ecNumber>
    </recommendedName>
    <alternativeName>
        <fullName evidence="1">OMP decarboxylase</fullName>
        <shortName evidence="1">OMPDCase</shortName>
        <shortName evidence="1">OMPdecase</shortName>
    </alternativeName>
</protein>
<evidence type="ECO:0000255" key="1">
    <source>
        <dbReference type="HAMAP-Rule" id="MF_01215"/>
    </source>
</evidence>
<reference key="1">
    <citation type="submission" date="2006-12" db="EMBL/GenBank/DDBJ databases">
        <title>Complete sequence of Acidovorax avenae subsp. citrulli AAC00-1.</title>
        <authorList>
            <person name="Copeland A."/>
            <person name="Lucas S."/>
            <person name="Lapidus A."/>
            <person name="Barry K."/>
            <person name="Detter J.C."/>
            <person name="Glavina del Rio T."/>
            <person name="Dalin E."/>
            <person name="Tice H."/>
            <person name="Pitluck S."/>
            <person name="Kiss H."/>
            <person name="Brettin T."/>
            <person name="Bruce D."/>
            <person name="Han C."/>
            <person name="Tapia R."/>
            <person name="Gilna P."/>
            <person name="Schmutz J."/>
            <person name="Larimer F."/>
            <person name="Land M."/>
            <person name="Hauser L."/>
            <person name="Kyrpides N."/>
            <person name="Kim E."/>
            <person name="Stahl D."/>
            <person name="Richardson P."/>
        </authorList>
    </citation>
    <scope>NUCLEOTIDE SEQUENCE [LARGE SCALE GENOMIC DNA]</scope>
    <source>
        <strain>AAC00-1</strain>
    </source>
</reference>
<sequence>MTFIDMLRGATARNDSLLCVGLDPEPSRFPAGLRGDAGRIYDFCAAIVDATADLACAFKPQIAYFAAHRAEEQLERLMRHMRATAPHVPVILDAKRGDIGSTAQQYAIEAFERYGADAVTLSPFMGFDSIEPYLAYHGKGAFLLCRTSNPGGDDLQSQRLASVDGQPLLFEHIARQAQGPWNRNGQLGLVVGATYPAEIERVRALAPTLPLLIPGVGAQGGDAAATVRAGLRPDGPVVVNSSRAILYASADEGFAAAARQAAQATRDALNAARG</sequence>
<accession>A1TW93</accession>
<comment type="catalytic activity">
    <reaction evidence="1">
        <text>orotidine 5'-phosphate + H(+) = UMP + CO2</text>
        <dbReference type="Rhea" id="RHEA:11596"/>
        <dbReference type="ChEBI" id="CHEBI:15378"/>
        <dbReference type="ChEBI" id="CHEBI:16526"/>
        <dbReference type="ChEBI" id="CHEBI:57538"/>
        <dbReference type="ChEBI" id="CHEBI:57865"/>
        <dbReference type="EC" id="4.1.1.23"/>
    </reaction>
</comment>
<comment type="pathway">
    <text evidence="1">Pyrimidine metabolism; UMP biosynthesis via de novo pathway; UMP from orotate: step 2/2.</text>
</comment>
<comment type="similarity">
    <text evidence="1">Belongs to the OMP decarboxylase family. Type 2 subfamily.</text>
</comment>
<keyword id="KW-0210">Decarboxylase</keyword>
<keyword id="KW-0456">Lyase</keyword>
<keyword id="KW-0665">Pyrimidine biosynthesis</keyword>
<dbReference type="EC" id="4.1.1.23" evidence="1"/>
<dbReference type="EMBL" id="CP000512">
    <property type="protein sequence ID" value="ABM35231.1"/>
    <property type="molecule type" value="Genomic_DNA"/>
</dbReference>
<dbReference type="RefSeq" id="WP_011797697.1">
    <property type="nucleotide sequence ID" value="NC_008752.1"/>
</dbReference>
<dbReference type="SMR" id="A1TW93"/>
<dbReference type="STRING" id="397945.Aave_4696"/>
<dbReference type="KEGG" id="aav:Aave_4696"/>
<dbReference type="eggNOG" id="COG0284">
    <property type="taxonomic scope" value="Bacteria"/>
</dbReference>
<dbReference type="HOGENOM" id="CLU_060704_1_0_4"/>
<dbReference type="OrthoDB" id="9808470at2"/>
<dbReference type="UniPathway" id="UPA00070">
    <property type="reaction ID" value="UER00120"/>
</dbReference>
<dbReference type="Proteomes" id="UP000002596">
    <property type="component" value="Chromosome"/>
</dbReference>
<dbReference type="GO" id="GO:0004590">
    <property type="term" value="F:orotidine-5'-phosphate decarboxylase activity"/>
    <property type="evidence" value="ECO:0007669"/>
    <property type="project" value="UniProtKB-UniRule"/>
</dbReference>
<dbReference type="GO" id="GO:0006207">
    <property type="term" value="P:'de novo' pyrimidine nucleobase biosynthetic process"/>
    <property type="evidence" value="ECO:0007669"/>
    <property type="project" value="InterPro"/>
</dbReference>
<dbReference type="GO" id="GO:0044205">
    <property type="term" value="P:'de novo' UMP biosynthetic process"/>
    <property type="evidence" value="ECO:0007669"/>
    <property type="project" value="UniProtKB-UniRule"/>
</dbReference>
<dbReference type="CDD" id="cd04725">
    <property type="entry name" value="OMP_decarboxylase_like"/>
    <property type="match status" value="1"/>
</dbReference>
<dbReference type="Gene3D" id="3.20.20.70">
    <property type="entry name" value="Aldolase class I"/>
    <property type="match status" value="1"/>
</dbReference>
<dbReference type="HAMAP" id="MF_01215">
    <property type="entry name" value="OMPdecase_type2"/>
    <property type="match status" value="1"/>
</dbReference>
<dbReference type="InterPro" id="IPR013785">
    <property type="entry name" value="Aldolase_TIM"/>
</dbReference>
<dbReference type="InterPro" id="IPR018089">
    <property type="entry name" value="OMPdecase_AS"/>
</dbReference>
<dbReference type="InterPro" id="IPR011995">
    <property type="entry name" value="OMPdecase_type-2"/>
</dbReference>
<dbReference type="InterPro" id="IPR001754">
    <property type="entry name" value="OMPdeCOase_dom"/>
</dbReference>
<dbReference type="InterPro" id="IPR011060">
    <property type="entry name" value="RibuloseP-bd_barrel"/>
</dbReference>
<dbReference type="NCBIfam" id="TIGR02127">
    <property type="entry name" value="pyrF_sub2"/>
    <property type="match status" value="1"/>
</dbReference>
<dbReference type="PANTHER" id="PTHR43375">
    <property type="entry name" value="OROTIDINE 5'-PHOSPHATE DECARBOXYLASE"/>
    <property type="match status" value="1"/>
</dbReference>
<dbReference type="PANTHER" id="PTHR43375:SF1">
    <property type="entry name" value="OROTIDINE 5'-PHOSPHATE DECARBOXYLASE"/>
    <property type="match status" value="1"/>
</dbReference>
<dbReference type="Pfam" id="PF00215">
    <property type="entry name" value="OMPdecase"/>
    <property type="match status" value="1"/>
</dbReference>
<dbReference type="SMART" id="SM00934">
    <property type="entry name" value="OMPdecase"/>
    <property type="match status" value="1"/>
</dbReference>
<dbReference type="SUPFAM" id="SSF51366">
    <property type="entry name" value="Ribulose-phoshate binding barrel"/>
    <property type="match status" value="1"/>
</dbReference>
<dbReference type="PROSITE" id="PS00156">
    <property type="entry name" value="OMPDECASE"/>
    <property type="match status" value="1"/>
</dbReference>
<proteinExistence type="inferred from homology"/>